<keyword id="KW-0963">Cytoplasm</keyword>
<keyword id="KW-0694">RNA-binding</keyword>
<reference key="1">
    <citation type="journal article" date="2008" name="Chem. Biol. Interact.">
        <title>Extending the Bacillus cereus group genomics to putative food-borne pathogens of different toxicity.</title>
        <authorList>
            <person name="Lapidus A."/>
            <person name="Goltsman E."/>
            <person name="Auger S."/>
            <person name="Galleron N."/>
            <person name="Segurens B."/>
            <person name="Dossat C."/>
            <person name="Land M.L."/>
            <person name="Broussolle V."/>
            <person name="Brillard J."/>
            <person name="Guinebretiere M.-H."/>
            <person name="Sanchis V."/>
            <person name="Nguen-the C."/>
            <person name="Lereclus D."/>
            <person name="Richardson P."/>
            <person name="Wincker P."/>
            <person name="Weissenbach J."/>
            <person name="Ehrlich S.D."/>
            <person name="Sorokin A."/>
        </authorList>
    </citation>
    <scope>NUCLEOTIDE SEQUENCE [LARGE SCALE GENOMIC DNA]</scope>
    <source>
        <strain>KBAB4</strain>
    </source>
</reference>
<proteinExistence type="inferred from homology"/>
<name>SSRP_BACMK</name>
<dbReference type="EMBL" id="CP000903">
    <property type="protein sequence ID" value="ABY46068.1"/>
    <property type="molecule type" value="Genomic_DNA"/>
</dbReference>
<dbReference type="RefSeq" id="WP_002034685.1">
    <property type="nucleotide sequence ID" value="NZ_CAKMRX030000110.1"/>
</dbReference>
<dbReference type="SMR" id="A9VQ41"/>
<dbReference type="GeneID" id="66265342"/>
<dbReference type="KEGG" id="bwe:BcerKBAB4_4920"/>
<dbReference type="eggNOG" id="COG0691">
    <property type="taxonomic scope" value="Bacteria"/>
</dbReference>
<dbReference type="HOGENOM" id="CLU_108953_0_0_9"/>
<dbReference type="Proteomes" id="UP000002154">
    <property type="component" value="Chromosome"/>
</dbReference>
<dbReference type="GO" id="GO:0005829">
    <property type="term" value="C:cytosol"/>
    <property type="evidence" value="ECO:0007669"/>
    <property type="project" value="TreeGrafter"/>
</dbReference>
<dbReference type="GO" id="GO:0003723">
    <property type="term" value="F:RNA binding"/>
    <property type="evidence" value="ECO:0007669"/>
    <property type="project" value="UniProtKB-UniRule"/>
</dbReference>
<dbReference type="GO" id="GO:0070929">
    <property type="term" value="P:trans-translation"/>
    <property type="evidence" value="ECO:0007669"/>
    <property type="project" value="UniProtKB-UniRule"/>
</dbReference>
<dbReference type="CDD" id="cd09294">
    <property type="entry name" value="SmpB"/>
    <property type="match status" value="1"/>
</dbReference>
<dbReference type="Gene3D" id="2.40.280.10">
    <property type="match status" value="1"/>
</dbReference>
<dbReference type="HAMAP" id="MF_00023">
    <property type="entry name" value="SmpB"/>
    <property type="match status" value="1"/>
</dbReference>
<dbReference type="InterPro" id="IPR023620">
    <property type="entry name" value="SmpB"/>
</dbReference>
<dbReference type="InterPro" id="IPR000037">
    <property type="entry name" value="SsrA-bd_prot"/>
</dbReference>
<dbReference type="NCBIfam" id="NF003843">
    <property type="entry name" value="PRK05422.1"/>
    <property type="match status" value="1"/>
</dbReference>
<dbReference type="NCBIfam" id="TIGR00086">
    <property type="entry name" value="smpB"/>
    <property type="match status" value="1"/>
</dbReference>
<dbReference type="PANTHER" id="PTHR30308:SF2">
    <property type="entry name" value="SSRA-BINDING PROTEIN"/>
    <property type="match status" value="1"/>
</dbReference>
<dbReference type="PANTHER" id="PTHR30308">
    <property type="entry name" value="TMRNA-BINDING COMPONENT OF TRANS-TRANSLATION TAGGING COMPLEX"/>
    <property type="match status" value="1"/>
</dbReference>
<dbReference type="Pfam" id="PF01668">
    <property type="entry name" value="SmpB"/>
    <property type="match status" value="1"/>
</dbReference>
<dbReference type="SUPFAM" id="SSF74982">
    <property type="entry name" value="Small protein B (SmpB)"/>
    <property type="match status" value="1"/>
</dbReference>
<sequence>MPKGTGKVIAQNKKAFHDYFIEETYEVGLVLQGTEIKSIRAGRVNLKDAFARIHNGEVWVHNMHINTYEQGNRFNHDPLRTRKLLLHKKEIDKLAGYAKETGYALVPVRIYLKNGFAKMALGLAKGKKQYDKRHDLKEKEAKREIARVFRDRQKM</sequence>
<organism>
    <name type="scientific">Bacillus mycoides (strain KBAB4)</name>
    <name type="common">Bacillus weihenstephanensis</name>
    <dbReference type="NCBI Taxonomy" id="315730"/>
    <lineage>
        <taxon>Bacteria</taxon>
        <taxon>Bacillati</taxon>
        <taxon>Bacillota</taxon>
        <taxon>Bacilli</taxon>
        <taxon>Bacillales</taxon>
        <taxon>Bacillaceae</taxon>
        <taxon>Bacillus</taxon>
        <taxon>Bacillus cereus group</taxon>
    </lineage>
</organism>
<evidence type="ECO:0000255" key="1">
    <source>
        <dbReference type="HAMAP-Rule" id="MF_00023"/>
    </source>
</evidence>
<feature type="chain" id="PRO_1000090135" description="SsrA-binding protein">
    <location>
        <begin position="1"/>
        <end position="155"/>
    </location>
</feature>
<gene>
    <name evidence="1" type="primary">smpB</name>
    <name type="ordered locus">BcerKBAB4_4920</name>
</gene>
<accession>A9VQ41</accession>
<comment type="function">
    <text evidence="1">Required for rescue of stalled ribosomes mediated by trans-translation. Binds to transfer-messenger RNA (tmRNA), required for stable association of tmRNA with ribosomes. tmRNA and SmpB together mimic tRNA shape, replacing the anticodon stem-loop with SmpB. tmRNA is encoded by the ssrA gene; the 2 termini fold to resemble tRNA(Ala) and it encodes a 'tag peptide', a short internal open reading frame. During trans-translation Ala-aminoacylated tmRNA acts like a tRNA, entering the A-site of stalled ribosomes, displacing the stalled mRNA. The ribosome then switches to translate the ORF on the tmRNA; the nascent peptide is terminated with the 'tag peptide' encoded by the tmRNA and targeted for degradation. The ribosome is freed to recommence translation, which seems to be the essential function of trans-translation.</text>
</comment>
<comment type="subcellular location">
    <subcellularLocation>
        <location evidence="1">Cytoplasm</location>
    </subcellularLocation>
    <text evidence="1">The tmRNA-SmpB complex associates with stalled 70S ribosomes.</text>
</comment>
<comment type="similarity">
    <text evidence="1">Belongs to the SmpB family.</text>
</comment>
<protein>
    <recommendedName>
        <fullName evidence="1">SsrA-binding protein</fullName>
    </recommendedName>
    <alternativeName>
        <fullName evidence="1">Small protein B</fullName>
    </alternativeName>
</protein>